<name>NNJA7_MAIZE</name>
<sequence length="478" mass="49642">MDDDNGLELSLGLSLGGSSGKAKARDAPLEPKAEPQVEESSSKGGLQTPDAPSGKFYQKSADNHEQNSKQRHSPVAPQFGNFWGQPGNSSGPVVDGSVEPVSHQPQLSSYQDGRMPINSGNNSEEQKPVSGNHKLPSEEMNFQKKHQTASDQPDAFSKSSDGGAKNAPISISTDDGSTGENEDVAESEAEGSNSWLVAQREDSAKGSVVNKGTDRKRSADAAADGFKGKRQPSFSGSESSSGKLTPGNLISMQASNVVALPYQVPGQVSGPPVLTNAPNFHPVCTVQLRPPTNGGLAVQTMGSASQVAFGYPAVQLPTLETGSSWAFGAPPQALSSFTAKDKADQTGTKQVDDGKKPREAGASSSAHAEDEKKADRGLSLMGSAIRPGIAPNVKFGGSGSYPDLPWVSTIGAGPNGRTISGVTYKFGRNEVKIVCACHGTHMSPEEFMRHASADAPAQDNSATLPAFPAGNQATSAEN</sequence>
<reference key="1">
    <citation type="submission" date="2008-07" db="EMBL/GenBank/DDBJ databases">
        <title>Maize full-length cDNA project.</title>
        <authorList>
            <person name="Yu Y."/>
            <person name="Currie J."/>
            <person name="Lomeli R."/>
            <person name="Angelova A."/>
            <person name="Collura K."/>
            <person name="Wissotski M."/>
            <person name="Campos D."/>
            <person name="Kudrna D."/>
            <person name="Golser W."/>
            <person name="Ashely E."/>
            <person name="Haller K."/>
            <person name="Descour A."/>
            <person name="Fernandes J."/>
            <person name="Zuccolo A."/>
            <person name="Soderlund C."/>
            <person name="Walbot V."/>
        </authorList>
    </citation>
    <scope>NUCLEOTIDE SEQUENCE [LARGE SCALE MRNA]</scope>
    <source>
        <strain>cv. B73</strain>
    </source>
</reference>
<comment type="subcellular location">
    <subcellularLocation>
        <location evidence="1">Nucleus</location>
    </subcellularLocation>
</comment>
<comment type="similarity">
    <text evidence="3">Belongs to the Ninja family.</text>
</comment>
<protein>
    <recommendedName>
        <fullName>Ninja-family protein 7</fullName>
    </recommendedName>
</protein>
<proteinExistence type="evidence at transcript level"/>
<organism>
    <name type="scientific">Zea mays</name>
    <name type="common">Maize</name>
    <dbReference type="NCBI Taxonomy" id="4577"/>
    <lineage>
        <taxon>Eukaryota</taxon>
        <taxon>Viridiplantae</taxon>
        <taxon>Streptophyta</taxon>
        <taxon>Embryophyta</taxon>
        <taxon>Tracheophyta</taxon>
        <taxon>Spermatophyta</taxon>
        <taxon>Magnoliopsida</taxon>
        <taxon>Liliopsida</taxon>
        <taxon>Poales</taxon>
        <taxon>Poaceae</taxon>
        <taxon>PACMAD clade</taxon>
        <taxon>Panicoideae</taxon>
        <taxon>Andropogonodae</taxon>
        <taxon>Andropogoneae</taxon>
        <taxon>Tripsacinae</taxon>
        <taxon>Zea</taxon>
    </lineage>
</organism>
<evidence type="ECO:0000250" key="1"/>
<evidence type="ECO:0000256" key="2">
    <source>
        <dbReference type="SAM" id="MobiDB-lite"/>
    </source>
</evidence>
<evidence type="ECO:0000305" key="3"/>
<keyword id="KW-0539">Nucleus</keyword>
<keyword id="KW-1185">Reference proteome</keyword>
<feature type="chain" id="PRO_0000369625" description="Ninja-family protein 7">
    <location>
        <begin position="1"/>
        <end position="478"/>
    </location>
</feature>
<feature type="region of interest" description="Disordered" evidence="2">
    <location>
        <begin position="1"/>
        <end position="247"/>
    </location>
</feature>
<feature type="region of interest" description="Disordered" evidence="2">
    <location>
        <begin position="336"/>
        <end position="374"/>
    </location>
</feature>
<feature type="region of interest" description="Disordered" evidence="2">
    <location>
        <begin position="454"/>
        <end position="478"/>
    </location>
</feature>
<feature type="compositionally biased region" description="Basic and acidic residues" evidence="2">
    <location>
        <begin position="23"/>
        <end position="35"/>
    </location>
</feature>
<feature type="compositionally biased region" description="Polar residues" evidence="2">
    <location>
        <begin position="169"/>
        <end position="179"/>
    </location>
</feature>
<feature type="compositionally biased region" description="Acidic residues" evidence="2">
    <location>
        <begin position="180"/>
        <end position="189"/>
    </location>
</feature>
<feature type="compositionally biased region" description="Low complexity" evidence="2">
    <location>
        <begin position="233"/>
        <end position="242"/>
    </location>
</feature>
<feature type="compositionally biased region" description="Basic and acidic residues" evidence="2">
    <location>
        <begin position="339"/>
        <end position="359"/>
    </location>
</feature>
<dbReference type="EMBL" id="BT041874">
    <property type="protein sequence ID" value="ACF86879.1"/>
    <property type="molecule type" value="mRNA"/>
</dbReference>
<dbReference type="FunCoup" id="B4FXN6">
    <property type="interactions" value="3178"/>
</dbReference>
<dbReference type="STRING" id="4577.B4FXN6"/>
<dbReference type="PaxDb" id="4577-GRMZM2G043764_P02"/>
<dbReference type="eggNOG" id="ENOG502QSTR">
    <property type="taxonomic scope" value="Eukaryota"/>
</dbReference>
<dbReference type="InParanoid" id="B4FXN6"/>
<dbReference type="Proteomes" id="UP000007305">
    <property type="component" value="Unplaced"/>
</dbReference>
<dbReference type="ExpressionAtlas" id="B4FXN6">
    <property type="expression patterns" value="baseline and differential"/>
</dbReference>
<dbReference type="GO" id="GO:0005634">
    <property type="term" value="C:nucleus"/>
    <property type="evidence" value="ECO:0000318"/>
    <property type="project" value="GO_Central"/>
</dbReference>
<dbReference type="GO" id="GO:0009867">
    <property type="term" value="P:jasmonic acid mediated signaling pathway"/>
    <property type="evidence" value="ECO:0000318"/>
    <property type="project" value="GO_Central"/>
</dbReference>
<dbReference type="GO" id="GO:0045892">
    <property type="term" value="P:negative regulation of DNA-templated transcription"/>
    <property type="evidence" value="ECO:0000318"/>
    <property type="project" value="GO_Central"/>
</dbReference>
<dbReference type="InterPro" id="IPR031307">
    <property type="entry name" value="Ninja_fam"/>
</dbReference>
<dbReference type="InterPro" id="IPR012463">
    <property type="entry name" value="Ninja_motif"/>
</dbReference>
<dbReference type="InterPro" id="IPR032308">
    <property type="entry name" value="TDBD"/>
</dbReference>
<dbReference type="PANTHER" id="PTHR31413">
    <property type="entry name" value="AFP HOMOLOG 2"/>
    <property type="match status" value="1"/>
</dbReference>
<dbReference type="PANTHER" id="PTHR31413:SF12">
    <property type="entry name" value="AFP HOMOLOG 2"/>
    <property type="match status" value="1"/>
</dbReference>
<dbReference type="Pfam" id="PF07897">
    <property type="entry name" value="EAR"/>
    <property type="match status" value="1"/>
</dbReference>
<dbReference type="Pfam" id="PF16135">
    <property type="entry name" value="TDBD"/>
    <property type="match status" value="1"/>
</dbReference>
<accession>B4FXN6</accession>